<name>PPR18_HUMAN</name>
<proteinExistence type="evidence at protein level"/>
<keyword id="KW-0007">Acetylation</keyword>
<keyword id="KW-0009">Actin-binding</keyword>
<keyword id="KW-0025">Alternative splicing</keyword>
<keyword id="KW-0963">Cytoplasm</keyword>
<keyword id="KW-0206">Cytoskeleton</keyword>
<keyword id="KW-0597">Phosphoprotein</keyword>
<keyword id="KW-1267">Proteomics identification</keyword>
<keyword id="KW-1185">Reference proteome</keyword>
<organism>
    <name type="scientific">Homo sapiens</name>
    <name type="common">Human</name>
    <dbReference type="NCBI Taxonomy" id="9606"/>
    <lineage>
        <taxon>Eukaryota</taxon>
        <taxon>Metazoa</taxon>
        <taxon>Chordata</taxon>
        <taxon>Craniata</taxon>
        <taxon>Vertebrata</taxon>
        <taxon>Euteleostomi</taxon>
        <taxon>Mammalia</taxon>
        <taxon>Eutheria</taxon>
        <taxon>Euarchontoglires</taxon>
        <taxon>Primates</taxon>
        <taxon>Haplorrhini</taxon>
        <taxon>Catarrhini</taxon>
        <taxon>Hominidae</taxon>
        <taxon>Homo</taxon>
    </lineage>
</organism>
<accession>Q6NYC8</accession>
<accession>A2AB01</accession>
<accession>A2AIB8</accession>
<accession>A4UBI6</accession>
<accession>A6NCB7</accession>
<accession>A8MSS7</accession>
<accession>B7ZCV7</accession>
<accession>Q68CK8</accession>
<accession>Q6ZTV1</accession>
<accession>Q6ZUJ6</accession>
<accession>Q8NDQ4</accession>
<accession>Q8TF52</accession>
<accession>Q9BRL9</accession>
<protein>
    <recommendedName>
        <fullName>Phostensin</fullName>
    </recommendedName>
    <alternativeName>
        <fullName>Protein phosphatase 1 F-actin cytoskeleton-targeting subunit</fullName>
    </alternativeName>
    <alternativeName>
        <fullName>Protein phosphatase 1 regulatory subunit 18</fullName>
    </alternativeName>
</protein>
<comment type="function">
    <molecule>Isoform 1</molecule>
    <text evidence="6">May target protein phosphatase 1 to F-actin cytoskeleton.</text>
</comment>
<comment type="function">
    <molecule>Isoform 4</molecule>
    <text evidence="5">May target protein phosphatase 1 to F-actin cytoskeleton.</text>
</comment>
<comment type="subunit">
    <text evidence="5">Interacts with Protein phosphatase 1 (PP1).</text>
</comment>
<comment type="interaction">
    <interactant intactId="EBI-2557469">
        <id>Q6NYC8</id>
    </interactant>
    <interactant intactId="EBI-3893380">
        <id>Q8N0Z2</id>
        <label>ABRA</label>
    </interactant>
    <organismsDiffer>false</organismsDiffer>
    <experiments>3</experiments>
</comment>
<comment type="interaction">
    <interactant intactId="EBI-2557469">
        <id>Q6NYC8</id>
    </interactant>
    <interactant intactId="EBI-2880652">
        <id>Q08043</id>
        <label>ACTN3</label>
    </interactant>
    <organismsDiffer>false</organismsDiffer>
    <experiments>3</experiments>
</comment>
<comment type="interaction">
    <interactant intactId="EBI-2557469">
        <id>Q6NYC8</id>
    </interactant>
    <interactant intactId="EBI-11975051">
        <id>Q8TD16-2</id>
        <label>BICD2</label>
    </interactant>
    <organismsDiffer>false</organismsDiffer>
    <experiments>3</experiments>
</comment>
<comment type="interaction">
    <interactant intactId="EBI-2557469">
        <id>Q6NYC8</id>
    </interactant>
    <interactant intactId="EBI-739580">
        <id>Q13137</id>
        <label>CALCOCO2</label>
    </interactant>
    <organismsDiffer>false</organismsDiffer>
    <experiments>3</experiments>
</comment>
<comment type="interaction">
    <interactant intactId="EBI-2557469">
        <id>Q6NYC8</id>
    </interactant>
    <interactant intactId="EBI-751319">
        <id>Q9H257</id>
        <label>CARD9</label>
    </interactant>
    <organismsDiffer>false</organismsDiffer>
    <experiments>4</experiments>
</comment>
<comment type="interaction">
    <interactant intactId="EBI-2557469">
        <id>Q6NYC8</id>
    </interactant>
    <interactant intactId="EBI-11530605">
        <id>Q9H257-2</id>
        <label>CARD9</label>
    </interactant>
    <organismsDiffer>false</organismsDiffer>
    <experiments>3</experiments>
</comment>
<comment type="interaction">
    <interactant intactId="EBI-2557469">
        <id>Q6NYC8</id>
    </interactant>
    <interactant intactId="EBI-741724">
        <id>Q8NA61</id>
        <label>CBY2</label>
    </interactant>
    <organismsDiffer>false</organismsDiffer>
    <experiments>3</experiments>
</comment>
<comment type="interaction">
    <interactant intactId="EBI-2557469">
        <id>Q6NYC8</id>
    </interactant>
    <interactant intactId="EBI-10171570">
        <id>Q68D86</id>
        <label>CCDC102B</label>
    </interactant>
    <organismsDiffer>false</organismsDiffer>
    <experiments>6</experiments>
</comment>
<comment type="interaction">
    <interactant intactId="EBI-2557469">
        <id>Q6NYC8</id>
    </interactant>
    <interactant intactId="EBI-10171416">
        <id>Q96JN2-2</id>
        <label>CCDC136</label>
    </interactant>
    <organismsDiffer>false</organismsDiffer>
    <experiments>3</experiments>
</comment>
<comment type="interaction">
    <interactant intactId="EBI-2557469">
        <id>Q6NYC8</id>
    </interactant>
    <interactant intactId="EBI-2808286">
        <id>Q2TAC2</id>
        <label>CCDC57</label>
    </interactant>
    <organismsDiffer>false</organismsDiffer>
    <experiments>3</experiments>
</comment>
<comment type="interaction">
    <interactant intactId="EBI-2557469">
        <id>Q6NYC8</id>
    </interactant>
    <interactant intactId="EBI-347573">
        <id>A6NC98</id>
        <label>CCDC88B</label>
    </interactant>
    <organismsDiffer>false</organismsDiffer>
    <experiments>3</experiments>
</comment>
<comment type="interaction">
    <interactant intactId="EBI-2557469">
        <id>Q6NYC8</id>
    </interactant>
    <interactant intactId="EBI-11063830">
        <id>Q86X02</id>
        <label>CDR2L</label>
    </interactant>
    <organismsDiffer>false</organismsDiffer>
    <experiments>3</experiments>
</comment>
<comment type="interaction">
    <interactant intactId="EBI-2557469">
        <id>Q6NYC8</id>
    </interactant>
    <interactant intactId="EBI-739624">
        <id>Q8NHQ1</id>
        <label>CEP70</label>
    </interactant>
    <organismsDiffer>false</organismsDiffer>
    <experiments>3</experiments>
</comment>
<comment type="interaction">
    <interactant intactId="EBI-2557469">
        <id>Q6NYC8</id>
    </interactant>
    <interactant intactId="EBI-3866319">
        <id>Q9Y2V7</id>
        <label>COG6</label>
    </interactant>
    <organismsDiffer>false</organismsDiffer>
    <experiments>3</experiments>
</comment>
<comment type="interaction">
    <interactant intactId="EBI-2557469">
        <id>Q6NYC8</id>
    </interactant>
    <interactant intactId="EBI-1055572">
        <id>P17661</id>
        <label>DES</label>
    </interactant>
    <organismsDiffer>false</organismsDiffer>
    <experiments>6</experiments>
</comment>
<comment type="interaction">
    <interactant intactId="EBI-2557469">
        <id>Q6NYC8</id>
    </interactant>
    <interactant intactId="EBI-998108">
        <id>Q86YF9</id>
        <label>DZIP1</label>
    </interactant>
    <organismsDiffer>false</organismsDiffer>
    <experiments>3</experiments>
</comment>
<comment type="interaction">
    <interactant intactId="EBI-2557469">
        <id>Q6NYC8</id>
    </interactant>
    <interactant intactId="EBI-373519">
        <id>Q9Y262</id>
        <label>EIF3L</label>
    </interactant>
    <organismsDiffer>false</organismsDiffer>
    <experiments>3</experiments>
</comment>
<comment type="interaction">
    <interactant intactId="EBI-2557469">
        <id>Q6NYC8</id>
    </interactant>
    <interactant intactId="EBI-10175124">
        <id>Q8IZU0</id>
        <label>FAM9B</label>
    </interactant>
    <organismsDiffer>false</organismsDiffer>
    <experiments>3</experiments>
</comment>
<comment type="interaction">
    <interactant intactId="EBI-2557469">
        <id>Q6NYC8</id>
    </interactant>
    <interactant intactId="EBI-750641">
        <id>Q5TD97</id>
        <label>FHL5</label>
    </interactant>
    <organismsDiffer>false</organismsDiffer>
    <experiments>3</experiments>
</comment>
<comment type="interaction">
    <interactant intactId="EBI-2557469">
        <id>Q6NYC8</id>
    </interactant>
    <interactant intactId="EBI-5661036">
        <id>A1L4K1</id>
        <label>FSD2</label>
    </interactant>
    <organismsDiffer>false</organismsDiffer>
    <experiments>6</experiments>
</comment>
<comment type="interaction">
    <interactant intactId="EBI-2557469">
        <id>Q6NYC8</id>
    </interactant>
    <interactant intactId="EBI-746252">
        <id>Q96CN9</id>
        <label>GCC1</label>
    </interactant>
    <organismsDiffer>false</organismsDiffer>
    <experiments>3</experiments>
</comment>
<comment type="interaction">
    <interactant intactId="EBI-2557469">
        <id>Q6NYC8</id>
    </interactant>
    <interactant intactId="EBI-744302">
        <id>P14136</id>
        <label>GFAP</label>
    </interactant>
    <organismsDiffer>false</organismsDiffer>
    <experiments>3</experiments>
</comment>
<comment type="interaction">
    <interactant intactId="EBI-2557469">
        <id>Q6NYC8</id>
    </interactant>
    <interactant intactId="EBI-2548508">
        <id>Q96IK5</id>
        <label>GMCL1</label>
    </interactant>
    <organismsDiffer>false</organismsDiffer>
    <experiments>3</experiments>
</comment>
<comment type="interaction">
    <interactant intactId="EBI-2557469">
        <id>Q6NYC8</id>
    </interactant>
    <interactant intactId="EBI-618309">
        <id>Q08379</id>
        <label>GOLGA2</label>
    </interactant>
    <organismsDiffer>false</organismsDiffer>
    <experiments>6</experiments>
</comment>
<comment type="interaction">
    <interactant intactId="EBI-2557469">
        <id>Q6NYC8</id>
    </interactant>
    <interactant intactId="EBI-5916454">
        <id>A6NEM1</id>
        <label>GOLGA6L9</label>
    </interactant>
    <organismsDiffer>false</organismsDiffer>
    <experiments>3</experiments>
</comment>
<comment type="interaction">
    <interactant intactId="EBI-2557469">
        <id>Q6NYC8</id>
    </interactant>
    <interactant intactId="EBI-11102276">
        <id>Q9HD26-2</id>
        <label>GOPC</label>
    </interactant>
    <organismsDiffer>false</organismsDiffer>
    <experiments>3</experiments>
</comment>
<comment type="interaction">
    <interactant intactId="EBI-2557469">
        <id>Q6NYC8</id>
    </interactant>
    <interactant intactId="EBI-717919">
        <id>Q4V328</id>
        <label>GRIPAP1</label>
    </interactant>
    <organismsDiffer>false</organismsDiffer>
    <experiments>4</experiments>
</comment>
<comment type="interaction">
    <interactant intactId="EBI-2557469">
        <id>Q6NYC8</id>
    </interactant>
    <interactant intactId="EBI-740290">
        <id>Q969Y2</id>
        <label>GTPBP3</label>
    </interactant>
    <organismsDiffer>false</organismsDiffer>
    <experiments>3</experiments>
</comment>
<comment type="interaction">
    <interactant intactId="EBI-2557469">
        <id>Q6NYC8</id>
    </interactant>
    <interactant intactId="EBI-712814">
        <id>P54257</id>
        <label>HAP1</label>
    </interactant>
    <organismsDiffer>false</organismsDiffer>
    <experiments>3</experiments>
</comment>
<comment type="interaction">
    <interactant intactId="EBI-2557469">
        <id>Q6NYC8</id>
    </interactant>
    <interactant intactId="EBI-748420">
        <id>Q9NSC5</id>
        <label>HOMER3</label>
    </interactant>
    <organismsDiffer>false</organismsDiffer>
    <experiments>6</experiments>
</comment>
<comment type="interaction">
    <interactant intactId="EBI-2557469">
        <id>Q6NYC8</id>
    </interactant>
    <interactant intactId="EBI-10961706">
        <id>Q96ED9-2</id>
        <label>HOOK2</label>
    </interactant>
    <organismsDiffer>false</organismsDiffer>
    <experiments>3</experiments>
</comment>
<comment type="interaction">
    <interactant intactId="EBI-2557469">
        <id>Q6NYC8</id>
    </interactant>
    <interactant intactId="EBI-7116203">
        <id>O75031</id>
        <label>HSF2BP</label>
    </interactant>
    <organismsDiffer>false</organismsDiffer>
    <experiments>3</experiments>
</comment>
<comment type="interaction">
    <interactant intactId="EBI-2557469">
        <id>Q6NYC8</id>
    </interactant>
    <interactant intactId="EBI-747204">
        <id>Q9UKT9</id>
        <label>IKZF3</label>
    </interactant>
    <organismsDiffer>false</organismsDiffer>
    <experiments>3</experiments>
</comment>
<comment type="interaction">
    <interactant intactId="EBI-2557469">
        <id>Q6NYC8</id>
    </interactant>
    <interactant intactId="EBI-749265">
        <id>Q8N6L0</id>
        <label>KASH5</label>
    </interactant>
    <organismsDiffer>false</organismsDiffer>
    <experiments>6</experiments>
</comment>
<comment type="interaction">
    <interactant intactId="EBI-2557469">
        <id>Q6NYC8</id>
    </interactant>
    <interactant intactId="EBI-4397613">
        <id>Q7L273</id>
        <label>KCTD9</label>
    </interactant>
    <organismsDiffer>false</organismsDiffer>
    <experiments>3</experiments>
</comment>
<comment type="interaction">
    <interactant intactId="EBI-2557469">
        <id>Q6NYC8</id>
    </interactant>
    <interactant intactId="EBI-10171552">
        <id>A1A4E9</id>
        <label>KRT13</label>
    </interactant>
    <organismsDiffer>false</organismsDiffer>
    <experiments>3</experiments>
</comment>
<comment type="interaction">
    <interactant intactId="EBI-2557469">
        <id>Q6NYC8</id>
    </interactant>
    <interactant intactId="EBI-739566">
        <id>P19012</id>
        <label>KRT15</label>
    </interactant>
    <organismsDiffer>false</organismsDiffer>
    <experiments>6</experiments>
</comment>
<comment type="interaction">
    <interactant intactId="EBI-2557469">
        <id>Q6NYC8</id>
    </interactant>
    <interactant intactId="EBI-356410">
        <id>P08779</id>
        <label>KRT16</label>
    </interactant>
    <organismsDiffer>false</organismsDiffer>
    <experiments>3</experiments>
</comment>
<comment type="interaction">
    <interactant intactId="EBI-2557469">
        <id>Q6NYC8</id>
    </interactant>
    <interactant intactId="EBI-742756">
        <id>P08727</id>
        <label>KRT19</label>
    </interactant>
    <organismsDiffer>false</organismsDiffer>
    <experiments>3</experiments>
</comment>
<comment type="interaction">
    <interactant intactId="EBI-2557469">
        <id>Q6NYC8</id>
    </interactant>
    <interactant intactId="EBI-3044087">
        <id>Q7Z3Y8</id>
        <label>KRT27</label>
    </interactant>
    <organismsDiffer>false</organismsDiffer>
    <experiments>3</experiments>
</comment>
<comment type="interaction">
    <interactant intactId="EBI-2557469">
        <id>Q6NYC8</id>
    </interactant>
    <interactant intactId="EBI-948001">
        <id>Q15323</id>
        <label>KRT31</label>
    </interactant>
    <organismsDiffer>false</organismsDiffer>
    <experiments>6</experiments>
</comment>
<comment type="interaction">
    <interactant intactId="EBI-2557469">
        <id>Q6NYC8</id>
    </interactant>
    <interactant intactId="EBI-1049638">
        <id>Q14525</id>
        <label>KRT33B</label>
    </interactant>
    <organismsDiffer>false</organismsDiffer>
    <experiments>3</experiments>
</comment>
<comment type="interaction">
    <interactant intactId="EBI-2557469">
        <id>Q6NYC8</id>
    </interactant>
    <interactant intactId="EBI-1047093">
        <id>O76011</id>
        <label>KRT34</label>
    </interactant>
    <organismsDiffer>false</organismsDiffer>
    <experiments>3</experiments>
</comment>
<comment type="interaction">
    <interactant intactId="EBI-2557469">
        <id>Q6NYC8</id>
    </interactant>
    <interactant intactId="EBI-11958506">
        <id>O76013-2</id>
        <label>KRT36</label>
    </interactant>
    <organismsDiffer>false</organismsDiffer>
    <experiments>3</experiments>
</comment>
<comment type="interaction">
    <interactant intactId="EBI-2557469">
        <id>Q6NYC8</id>
    </interactant>
    <interactant intactId="EBI-10171697">
        <id>Q6A162</id>
        <label>KRT40</label>
    </interactant>
    <organismsDiffer>false</organismsDiffer>
    <experiments>3</experiments>
</comment>
<comment type="interaction">
    <interactant intactId="EBI-2557469">
        <id>Q6NYC8</id>
    </interactant>
    <interactant intactId="EBI-740738">
        <id>O95751</id>
        <label>LDOC1</label>
    </interactant>
    <organismsDiffer>false</organismsDiffer>
    <experiments>3</experiments>
</comment>
<comment type="interaction">
    <interactant intactId="EBI-2557469">
        <id>Q6NYC8</id>
    </interactant>
    <interactant intactId="EBI-1216080">
        <id>Q9Y250</id>
        <label>LZTS1</label>
    </interactant>
    <organismsDiffer>false</organismsDiffer>
    <experiments>3</experiments>
</comment>
<comment type="interaction">
    <interactant intactId="EBI-2557469">
        <id>Q6NYC8</id>
    </interactant>
    <interactant intactId="EBI-741037">
        <id>Q9BRK4</id>
        <label>LZTS2</label>
    </interactant>
    <organismsDiffer>false</organismsDiffer>
    <experiments>3</experiments>
</comment>
<comment type="interaction">
    <interactant intactId="EBI-2557469">
        <id>Q6NYC8</id>
    </interactant>
    <interactant intactId="EBI-742610">
        <id>Q9Y6D9</id>
        <label>MAD1L1</label>
    </interactant>
    <organismsDiffer>false</organismsDiffer>
    <experiments>3</experiments>
</comment>
<comment type="interaction">
    <interactant intactId="EBI-2557469">
        <id>Q6NYC8</id>
    </interactant>
    <interactant intactId="EBI-959949">
        <id>P28482</id>
        <label>MAPK1</label>
    </interactant>
    <organismsDiffer>false</organismsDiffer>
    <experiments>3</experiments>
</comment>
<comment type="interaction">
    <interactant intactId="EBI-2557469">
        <id>Q6NYC8</id>
    </interactant>
    <interactant intactId="EBI-16439278">
        <id>Q6FHY5</id>
        <label>MEOX2</label>
    </interactant>
    <organismsDiffer>false</organismsDiffer>
    <experiments>3</experiments>
</comment>
<comment type="interaction">
    <interactant intactId="EBI-2557469">
        <id>Q6NYC8</id>
    </interactant>
    <interactant intactId="EBI-10172526">
        <id>Q9UJV3-2</id>
        <label>MID2</label>
    </interactant>
    <organismsDiffer>false</organismsDiffer>
    <experiments>6</experiments>
</comment>
<comment type="interaction">
    <interactant intactId="EBI-2557469">
        <id>Q6NYC8</id>
    </interactant>
    <interactant intactId="EBI-720441">
        <id>Q96DV4</id>
        <label>MRPL38</label>
    </interactant>
    <organismsDiffer>false</organismsDiffer>
    <experiments>3</experiments>
</comment>
<comment type="interaction">
    <interactant intactId="EBI-2557469">
        <id>Q6NYC8</id>
    </interactant>
    <interactant intactId="EBI-742948">
        <id>Q5JR59</id>
        <label>MTUS2</label>
    </interactant>
    <organismsDiffer>false</organismsDiffer>
    <experiments>3</experiments>
</comment>
<comment type="interaction">
    <interactant intactId="EBI-2557469">
        <id>Q6NYC8</id>
    </interactant>
    <interactant intactId="EBI-11522433">
        <id>Q5JR59-3</id>
        <label>MTUS2</label>
    </interactant>
    <organismsDiffer>false</organismsDiffer>
    <experiments>3</experiments>
</comment>
<comment type="interaction">
    <interactant intactId="EBI-2557469">
        <id>Q6NYC8</id>
    </interactant>
    <interactant intactId="EBI-10178578">
        <id>I6L9F6</id>
        <label>NEFL</label>
    </interactant>
    <organismsDiffer>false</organismsDiffer>
    <experiments>3</experiments>
</comment>
<comment type="interaction">
    <interactant intactId="EBI-2557469">
        <id>Q6NYC8</id>
    </interactant>
    <interactant intactId="EBI-475646">
        <id>P07196</id>
        <label>NEFL</label>
    </interactant>
    <organismsDiffer>false</organismsDiffer>
    <experiments>3</experiments>
</comment>
<comment type="interaction">
    <interactant intactId="EBI-2557469">
        <id>Q6NYC8</id>
    </interactant>
    <interactant intactId="EBI-1105124">
        <id>Q5VU43</id>
        <label>PDE4DIP</label>
    </interactant>
    <organismsDiffer>false</organismsDiffer>
    <experiments>3</experiments>
</comment>
<comment type="interaction">
    <interactant intactId="EBI-2557469">
        <id>Q6NYC8</id>
    </interactant>
    <interactant intactId="EBI-14066006">
        <id>Q4G0R1</id>
        <label>PIBF1</label>
    </interactant>
    <organismsDiffer>false</organismsDiffer>
    <experiments>3</experiments>
</comment>
<comment type="interaction">
    <interactant intactId="EBI-2557469">
        <id>Q6NYC8</id>
    </interactant>
    <interactant intactId="EBI-742388">
        <id>Q9H8W4</id>
        <label>PLEKHF2</label>
    </interactant>
    <organismsDiffer>false</organismsDiffer>
    <experiments>3</experiments>
</comment>
<comment type="interaction">
    <interactant intactId="EBI-2557469">
        <id>Q6NYC8</id>
    </interactant>
    <interactant intactId="EBI-357253">
        <id>P62136</id>
        <label>PPP1CA</label>
    </interactant>
    <organismsDiffer>false</organismsDiffer>
    <experiments>7</experiments>
</comment>
<comment type="interaction">
    <interactant intactId="EBI-2557469">
        <id>Q6NYC8</id>
    </interactant>
    <interactant intactId="EBI-1105153">
        <id>Q96KQ4</id>
        <label>PPP1R13B</label>
    </interactant>
    <organismsDiffer>false</organismsDiffer>
    <experiments>3</experiments>
</comment>
<comment type="interaction">
    <interactant intactId="EBI-2557469">
        <id>Q6NYC8</id>
    </interactant>
    <interactant intactId="EBI-752074">
        <id>P41219</id>
        <label>PRPH</label>
    </interactant>
    <organismsDiffer>false</organismsDiffer>
    <experiments>3</experiments>
</comment>
<comment type="interaction">
    <interactant intactId="EBI-2557469">
        <id>Q6NYC8</id>
    </interactant>
    <interactant intactId="EBI-741237">
        <id>O60504</id>
        <label>SORBS3</label>
    </interactant>
    <organismsDiffer>false</organismsDiffer>
    <experiments>3</experiments>
</comment>
<comment type="interaction">
    <interactant intactId="EBI-2557469">
        <id>Q6NYC8</id>
    </interactant>
    <interactant intactId="EBI-715381">
        <id>Q96EA4</id>
        <label>SPDL1</label>
    </interactant>
    <organismsDiffer>false</organismsDiffer>
    <experiments>3</experiments>
</comment>
<comment type="interaction">
    <interactant intactId="EBI-2557469">
        <id>Q6NYC8</id>
    </interactant>
    <interactant intactId="EBI-714135">
        <id>O75558</id>
        <label>STX11</label>
    </interactant>
    <organismsDiffer>false</organismsDiffer>
    <experiments>6</experiments>
</comment>
<comment type="interaction">
    <interactant intactId="EBI-2557469">
        <id>Q6NYC8</id>
    </interactant>
    <interactant intactId="EBI-533224">
        <id>P15884</id>
        <label>TCF4</label>
    </interactant>
    <organismsDiffer>false</organismsDiffer>
    <experiments>3</experiments>
</comment>
<comment type="interaction">
    <interactant intactId="EBI-2557469">
        <id>Q6NYC8</id>
    </interactant>
    <interactant intactId="EBI-742397">
        <id>Q8IYF3</id>
        <label>TEX11</label>
    </interactant>
    <organismsDiffer>false</organismsDiffer>
    <experiments>3</experiments>
</comment>
<comment type="interaction">
    <interactant intactId="EBI-2557469">
        <id>Q6NYC8</id>
    </interactant>
    <interactant intactId="EBI-11523345">
        <id>Q8IYF3-3</id>
        <label>TEX11</label>
    </interactant>
    <organismsDiffer>false</organismsDiffer>
    <experiments>3</experiments>
</comment>
<comment type="interaction">
    <interactant intactId="EBI-2557469">
        <id>Q6NYC8</id>
    </interactant>
    <interactant intactId="EBI-1105213">
        <id>Q9UBB9</id>
        <label>TFIP11</label>
    </interactant>
    <organismsDiffer>false</organismsDiffer>
    <experiments>3</experiments>
</comment>
<comment type="interaction">
    <interactant intactId="EBI-2557469">
        <id>Q6NYC8</id>
    </interactant>
    <interactant intactId="EBI-355744">
        <id>Q12933</id>
        <label>TRAF2</label>
    </interactant>
    <organismsDiffer>false</organismsDiffer>
    <experiments>3</experiments>
</comment>
<comment type="interaction">
    <interactant intactId="EBI-2557469">
        <id>Q6NYC8</id>
    </interactant>
    <interactant intactId="EBI-740098">
        <id>P36406</id>
        <label>TRIM23</label>
    </interactant>
    <organismsDiffer>false</organismsDiffer>
    <experiments>3</experiments>
</comment>
<comment type="interaction">
    <interactant intactId="EBI-2557469">
        <id>Q6NYC8</id>
    </interactant>
    <interactant intactId="EBI-719493">
        <id>P14373</id>
        <label>TRIM27</label>
    </interactant>
    <organismsDiffer>false</organismsDiffer>
    <experiments>7</experiments>
</comment>
<comment type="interaction">
    <interactant intactId="EBI-2557469">
        <id>Q6NYC8</id>
    </interactant>
    <interactant intactId="EBI-2130429">
        <id>Q9BYV2</id>
        <label>TRIM54</label>
    </interactant>
    <organismsDiffer>false</organismsDiffer>
    <experiments>6</experiments>
</comment>
<comment type="interaction">
    <interactant intactId="EBI-2557469">
        <id>Q6NYC8</id>
    </interactant>
    <interactant intactId="EBI-6929619">
        <id>Q9BVG3</id>
        <label>TRIM62</label>
    </interactant>
    <organismsDiffer>false</organismsDiffer>
    <experiments>3</experiments>
</comment>
<comment type="interaction">
    <interactant intactId="EBI-2557469">
        <id>Q6NYC8</id>
    </interactant>
    <interactant intactId="EBI-749955">
        <id>Q86WT6</id>
        <label>TRIM69</label>
    </interactant>
    <organismsDiffer>false</organismsDiffer>
    <experiments>3</experiments>
</comment>
<comment type="interaction">
    <interactant intactId="EBI-2557469">
        <id>Q6NYC8</id>
    </interactant>
    <interactant intactId="EBI-12806590">
        <id>Q86WV8</id>
        <label>TSC1</label>
    </interactant>
    <organismsDiffer>false</organismsDiffer>
    <experiments>3</experiments>
</comment>
<comment type="interaction">
    <interactant intactId="EBI-2557469">
        <id>Q6NYC8</id>
    </interactant>
    <interactant intactId="EBI-744794">
        <id>Q9BZW7</id>
        <label>TSGA10</label>
    </interactant>
    <organismsDiffer>false</organismsDiffer>
    <experiments>3</experiments>
</comment>
<comment type="interaction">
    <interactant intactId="EBI-2557469">
        <id>Q6NYC8</id>
    </interactant>
    <interactant intactId="EBI-353844">
        <id>P08670</id>
        <label>VIM</label>
    </interactant>
    <organismsDiffer>false</organismsDiffer>
    <experiments>3</experiments>
</comment>
<comment type="interaction">
    <interactant intactId="EBI-2557469">
        <id>Q6NYC8</id>
    </interactant>
    <interactant intactId="EBI-2799833">
        <id>Q8N1B4</id>
        <label>VPS52</label>
    </interactant>
    <organismsDiffer>false</organismsDiffer>
    <experiments>6</experiments>
</comment>
<comment type="interaction">
    <interactant intactId="EBI-2557469">
        <id>Q6NYC8</id>
    </interactant>
    <interactant intactId="EBI-12030590">
        <id>Q9H0C1</id>
        <label>ZMYND12</label>
    </interactant>
    <organismsDiffer>false</organismsDiffer>
    <experiments>3</experiments>
</comment>
<comment type="interaction">
    <interactant intactId="EBI-2557469">
        <id>Q6NYC8</id>
    </interactant>
    <interactant intactId="EBI-527853">
        <id>Q9UGI0</id>
        <label>ZRANB1</label>
    </interactant>
    <organismsDiffer>false</organismsDiffer>
    <experiments>3</experiments>
</comment>
<comment type="subcellular location">
    <molecule>Isoform 1</molecule>
    <subcellularLocation>
        <location evidence="6">Cytoplasm</location>
        <location evidence="6">Cytoskeleton</location>
    </subcellularLocation>
</comment>
<comment type="subcellular location">
    <molecule>Isoform 4</molecule>
    <subcellularLocation>
        <location evidence="5">Cytoplasm</location>
        <location evidence="5">Cytoskeleton</location>
    </subcellularLocation>
</comment>
<comment type="alternative products">
    <event type="alternative splicing"/>
    <isoform>
        <id>Q6NYC8-1</id>
        <name>1</name>
        <name>110 kDa</name>
        <name>phostensin-beta</name>
        <sequence type="displayed"/>
    </isoform>
    <isoform>
        <id>Q6NYC8-2</id>
        <name>2</name>
        <sequence type="described" ref="VSP_014258 VSP_014259"/>
    </isoform>
    <isoform>
        <id>Q6NYC8-3</id>
        <name>3</name>
        <sequence type="described" ref="VSP_057118 VSP_057119"/>
    </isoform>
    <isoform>
        <id>Q6NYC8-4</id>
        <name>4</name>
        <name>26kDa</name>
        <name>phostensin-alpha</name>
        <sequence type="described" ref="VSP_057117"/>
    </isoform>
</comment>
<comment type="tissue specificity">
    <text evidence="5">Isoform 4 is predominantly expressed in leukocytes and spleen.</text>
</comment>
<comment type="sequence caution" evidence="8">
    <conflict type="erroneous initiation">
        <sequence resource="EMBL-CDS" id="BAB85535"/>
    </conflict>
    <text>Extended N-terminus.</text>
</comment>
<feature type="chain" id="PRO_0000050807" description="Phostensin">
    <location>
        <begin position="1"/>
        <end position="613"/>
    </location>
</feature>
<feature type="region of interest" description="Disordered" evidence="2">
    <location>
        <begin position="18"/>
        <end position="231"/>
    </location>
</feature>
<feature type="region of interest" description="Disordered" evidence="2">
    <location>
        <begin position="266"/>
        <end position="500"/>
    </location>
</feature>
<feature type="region of interest" description="Disordered" evidence="2">
    <location>
        <begin position="552"/>
        <end position="595"/>
    </location>
</feature>
<feature type="compositionally biased region" description="Basic and acidic residues" evidence="2">
    <location>
        <begin position="18"/>
        <end position="33"/>
    </location>
</feature>
<feature type="compositionally biased region" description="Basic and acidic residues" evidence="2">
    <location>
        <begin position="104"/>
        <end position="154"/>
    </location>
</feature>
<feature type="compositionally biased region" description="Basic and acidic residues" evidence="2">
    <location>
        <begin position="167"/>
        <end position="191"/>
    </location>
</feature>
<feature type="compositionally biased region" description="Basic and acidic residues" evidence="2">
    <location>
        <begin position="199"/>
        <end position="221"/>
    </location>
</feature>
<feature type="compositionally biased region" description="Basic and acidic residues" evidence="2">
    <location>
        <begin position="266"/>
        <end position="282"/>
    </location>
</feature>
<feature type="compositionally biased region" description="Polar residues" evidence="2">
    <location>
        <begin position="295"/>
        <end position="309"/>
    </location>
</feature>
<feature type="compositionally biased region" description="Basic and acidic residues" evidence="2">
    <location>
        <begin position="314"/>
        <end position="327"/>
    </location>
</feature>
<feature type="compositionally biased region" description="Basic and acidic residues" evidence="2">
    <location>
        <begin position="340"/>
        <end position="350"/>
    </location>
</feature>
<feature type="compositionally biased region" description="Basic and acidic residues" evidence="2">
    <location>
        <begin position="357"/>
        <end position="366"/>
    </location>
</feature>
<feature type="compositionally biased region" description="Pro residues" evidence="2">
    <location>
        <begin position="424"/>
        <end position="446"/>
    </location>
</feature>
<feature type="compositionally biased region" description="Low complexity" evidence="2">
    <location>
        <begin position="476"/>
        <end position="499"/>
    </location>
</feature>
<feature type="compositionally biased region" description="Pro residues" evidence="2">
    <location>
        <begin position="567"/>
        <end position="578"/>
    </location>
</feature>
<feature type="compositionally biased region" description="Acidic residues" evidence="2">
    <location>
        <begin position="580"/>
        <end position="589"/>
    </location>
</feature>
<feature type="modified residue" description="Phosphoserine" evidence="10 12 15">
    <location>
        <position position="54"/>
    </location>
</feature>
<feature type="modified residue" description="Phosphoserine" evidence="14">
    <location>
        <position position="125"/>
    </location>
</feature>
<feature type="modified residue" description="Phosphoserine" evidence="9 14">
    <location>
        <position position="133"/>
    </location>
</feature>
<feature type="modified residue" description="Phosphoserine" evidence="12 14">
    <location>
        <position position="175"/>
    </location>
</feature>
<feature type="modified residue" description="Phosphoserine" evidence="12 14">
    <location>
        <position position="195"/>
    </location>
</feature>
<feature type="modified residue" description="Phosphothreonine" evidence="12">
    <location>
        <position position="199"/>
    </location>
</feature>
<feature type="modified residue" description="Phosphoserine" evidence="10 12 14 15">
    <location>
        <position position="224"/>
    </location>
</feature>
<feature type="modified residue" description="Phosphoserine" evidence="9 11 12 13 14">
    <location>
        <position position="368"/>
    </location>
</feature>
<feature type="modified residue" description="Phosphoserine" evidence="1">
    <location>
        <position position="432"/>
    </location>
</feature>
<feature type="modified residue" description="N6-acetyllysine" evidence="1">
    <location>
        <position position="457"/>
    </location>
</feature>
<feature type="modified residue" description="Phosphoserine" evidence="14">
    <location>
        <position position="490"/>
    </location>
</feature>
<feature type="modified residue" description="Phosphoserine" evidence="1">
    <location>
        <position position="530"/>
    </location>
</feature>
<feature type="splice variant" id="VSP_057117" description="In isoform 4.">
    <location>
        <begin position="1"/>
        <end position="448"/>
    </location>
</feature>
<feature type="splice variant" id="VSP_057118" description="In isoform 3.">
    <location>
        <begin position="1"/>
        <end position="325"/>
    </location>
</feature>
<feature type="splice variant" id="VSP_014258" description="In isoform 2." evidence="7">
    <original>NSGKAREWTPRDIEAQTQKPEPPESAEKLLESPGVEAGEGE</original>
    <variation>IMSLAGKGNQHLVTCFPHPVSGGRANCPISTLIQSPWCGWG</variation>
    <location>
        <begin position="337"/>
        <end position="377"/>
    </location>
</feature>
<feature type="splice variant" id="VSP_014259" description="In isoform 2." evidence="7">
    <location>
        <begin position="378"/>
        <end position="613"/>
    </location>
</feature>
<feature type="splice variant" id="VSP_057119" description="In isoform 3.">
    <original>ELGPEPEVPSAPNPPAAQPDD</original>
    <variation>RRRAKLGLSPGEPSPVLGTVEAGPPDPDESAVLLEAIGPVHQNRFIRQERQQQQQQQQRSEELLAERKPGPLEARERRPSPGEMRDQSPKGRESR</variation>
    <location>
        <begin position="562"/>
        <end position="582"/>
    </location>
</feature>
<feature type="sequence variant" id="VAR_046132" description="In dbSNP:rs9262144." evidence="3">
    <original>R</original>
    <variation>G</variation>
    <location>
        <position position="222"/>
    </location>
</feature>
<feature type="sequence variant" id="VAR_046133" description="In dbSNP:rs9262143." evidence="3 4">
    <original>G</original>
    <variation>R</variation>
    <location>
        <position position="339"/>
    </location>
</feature>
<feature type="sequence variant" id="VAR_034045" description="In dbSNP:rs2213944.">
    <original>P</original>
    <variation>L</variation>
    <location>
        <position position="356"/>
    </location>
</feature>
<feature type="mutagenesis site" description="Decrease binding to PP1. Complete inhibition of PP1 binding; when associated with G-542." evidence="5">
    <original>I</original>
    <variation>G</variation>
    <location>
        <position position="540"/>
    </location>
</feature>
<feature type="mutagenesis site" description="Decrease binding to PP1. Decrease binding to PP1. Complete inhibition of PP1 binding; when associated with G-540." evidence="5">
    <original>F</original>
    <variation>G</variation>
    <location>
        <position position="542"/>
    </location>
</feature>
<feature type="sequence conflict" description="In Ref. 4; BAC86229." evidence="8" ref="4">
    <original>A</original>
    <variation>T</variation>
    <location>
        <position position="81"/>
    </location>
</feature>
<feature type="sequence conflict" description="In Ref. 4; BAC86229." evidence="8" ref="4">
    <original>E</original>
    <variation>G</variation>
    <location>
        <position position="237"/>
    </location>
</feature>
<feature type="sequence conflict" description="In Ref. 3; BAD38640." evidence="8" ref="3">
    <original>S</original>
    <variation>G</variation>
    <location>
        <position position="307"/>
    </location>
</feature>
<sequence length="613" mass="67943">MATIPDWKLQLLARRRQEEASVRGREKAERERLSQMPAWKRGLLERRRAKLGLSPGEPSPVLGTVEAGPPDPDESAVLLEAIGPVHQNRFIRQERQQQQQQQQRSEELLAERKPGPLEARERRPSPGEMRDQSPKGRESREERLSPRETRERRLGIGGAQELSLRPLEARDWRQSPGEVGDRSSRLSEAWKWRLSPGETPERSLRLAESREQSPRRKEVESRLSPGESAYQKLGLTEAHKWRPDSRESQEQSLVQLEATEWRLRSGEERQDYSEECGRKEEWPVPGVAPKETAELSETLTREAQGNSSAGVEAAEQRPVEDGERGMKPTEGWKWTLNSGKAREWTPRDIEAQTQKPEPPESAEKLLESPGVEAGEGEAEKEEAGAQGRPLRALQNCCSVPSPLPPEDAGTGGLRQQEEEAVELQPPPPAPLSPPPPAPTAPQPPGDPLMSRLFYGVKAGPGVGAPRRSGHTFTVNPRRSVPPATPATPTSPATVDAAVPGAGKKRYPTAEEILVLGGYLRLSRSCLAKGSPERHHKQLKISFSETALETTYQYPSESSVLEELGPEPEVPSAPNPPAAQPDDEEDEEELLLLQPELQGGLRTKALIVDESCRR</sequence>
<reference key="1">
    <citation type="journal article" date="2007" name="Biochem. Biophys. Res. Commun.">
        <title>Identification of phostensin, a PP1 F-actin cytoskeleton targeting subunit.</title>
        <authorList>
            <person name="Kao S.-C."/>
            <person name="Chen C.-Y."/>
            <person name="Wang S.-L."/>
            <person name="Yang J.-J."/>
            <person name="Hung W.-C."/>
            <person name="Chen Y.-C."/>
            <person name="Lai N.-S."/>
            <person name="Liu H.-T."/>
            <person name="Huang H.-L."/>
            <person name="Chen H.-C."/>
            <person name="Lin T.-H."/>
            <person name="Huang H.-B."/>
        </authorList>
    </citation>
    <scope>NUCLEOTIDE SEQUENCE [MRNA] (ISOFORM 4)</scope>
    <scope>FUNCTION (ISOFORM 4)</scope>
    <scope>SUBCELLULAR LOCATION (ISOFORM 4)</scope>
    <scope>INTERACTION WITH PROTEIN PHOSPHATASE 1</scope>
    <scope>MUTAGENESIS OF ILE-540 AND PHE-542</scope>
    <scope>TISSUE SPECIFICITY</scope>
</reference>
<reference key="2">
    <citation type="journal article" date="2001" name="DNA Res.">
        <title>Prediction of the coding sequences of unidentified human genes. XXII. The complete sequences of 50 new cDNA clones which code for large proteins.</title>
        <authorList>
            <person name="Nagase T."/>
            <person name="Kikuno R."/>
            <person name="Ohara O."/>
        </authorList>
    </citation>
    <scope>NUCLEOTIDE SEQUENCE [LARGE SCALE MRNA] (ISOFORM 1)</scope>
    <source>
        <tissue>Brain</tissue>
    </source>
</reference>
<reference key="3">
    <citation type="journal article" date="2004" name="Oncogene">
        <title>Expression profiling and differential screening between hepatoblastomas and the corresponding normal livers: identification of high expression of the PLK1 oncogene as a poor-prognostic indicator of hepatoblastomas.</title>
        <authorList>
            <person name="Yamada S."/>
            <person name="Ohira M."/>
            <person name="Horie H."/>
            <person name="Ando K."/>
            <person name="Takayasu H."/>
            <person name="Suzuki Y."/>
            <person name="Sugano S."/>
            <person name="Hirata T."/>
            <person name="Goto T."/>
            <person name="Matsunaga T."/>
            <person name="Hiyama E."/>
            <person name="Hayashi Y."/>
            <person name="Ando H."/>
            <person name="Suita S."/>
            <person name="Kaneko M."/>
            <person name="Sasaki F."/>
            <person name="Hashizume K."/>
            <person name="Ohnuma N."/>
            <person name="Nakagawara A."/>
        </authorList>
    </citation>
    <scope>NUCLEOTIDE SEQUENCE [LARGE SCALE MRNA] (ISOFORM 1)</scope>
    <source>
        <tissue>Hepatoblastoma</tissue>
    </source>
</reference>
<reference key="4">
    <citation type="journal article" date="2004" name="Nat. Genet.">
        <title>Complete sequencing and characterization of 21,243 full-length human cDNAs.</title>
        <authorList>
            <person name="Ota T."/>
            <person name="Suzuki Y."/>
            <person name="Nishikawa T."/>
            <person name="Otsuki T."/>
            <person name="Sugiyama T."/>
            <person name="Irie R."/>
            <person name="Wakamatsu A."/>
            <person name="Hayashi K."/>
            <person name="Sato H."/>
            <person name="Nagai K."/>
            <person name="Kimura K."/>
            <person name="Makita H."/>
            <person name="Sekine M."/>
            <person name="Obayashi M."/>
            <person name="Nishi T."/>
            <person name="Shibahara T."/>
            <person name="Tanaka T."/>
            <person name="Ishii S."/>
            <person name="Yamamoto J."/>
            <person name="Saito K."/>
            <person name="Kawai Y."/>
            <person name="Isono Y."/>
            <person name="Nakamura Y."/>
            <person name="Nagahari K."/>
            <person name="Murakami K."/>
            <person name="Yasuda T."/>
            <person name="Iwayanagi T."/>
            <person name="Wagatsuma M."/>
            <person name="Shiratori A."/>
            <person name="Sudo H."/>
            <person name="Hosoiri T."/>
            <person name="Kaku Y."/>
            <person name="Kodaira H."/>
            <person name="Kondo H."/>
            <person name="Sugawara M."/>
            <person name="Takahashi M."/>
            <person name="Kanda K."/>
            <person name="Yokoi T."/>
            <person name="Furuya T."/>
            <person name="Kikkawa E."/>
            <person name="Omura Y."/>
            <person name="Abe K."/>
            <person name="Kamihara K."/>
            <person name="Katsuta N."/>
            <person name="Sato K."/>
            <person name="Tanikawa M."/>
            <person name="Yamazaki M."/>
            <person name="Ninomiya K."/>
            <person name="Ishibashi T."/>
            <person name="Yamashita H."/>
            <person name="Murakawa K."/>
            <person name="Fujimori K."/>
            <person name="Tanai H."/>
            <person name="Kimata M."/>
            <person name="Watanabe M."/>
            <person name="Hiraoka S."/>
            <person name="Chiba Y."/>
            <person name="Ishida S."/>
            <person name="Ono Y."/>
            <person name="Takiguchi S."/>
            <person name="Watanabe S."/>
            <person name="Yosida M."/>
            <person name="Hotuta T."/>
            <person name="Kusano J."/>
            <person name="Kanehori K."/>
            <person name="Takahashi-Fujii A."/>
            <person name="Hara H."/>
            <person name="Tanase T.-O."/>
            <person name="Nomura Y."/>
            <person name="Togiya S."/>
            <person name="Komai F."/>
            <person name="Hara R."/>
            <person name="Takeuchi K."/>
            <person name="Arita M."/>
            <person name="Imose N."/>
            <person name="Musashino K."/>
            <person name="Yuuki H."/>
            <person name="Oshima A."/>
            <person name="Sasaki N."/>
            <person name="Aotsuka S."/>
            <person name="Yoshikawa Y."/>
            <person name="Matsunawa H."/>
            <person name="Ichihara T."/>
            <person name="Shiohata N."/>
            <person name="Sano S."/>
            <person name="Moriya S."/>
            <person name="Momiyama H."/>
            <person name="Satoh N."/>
            <person name="Takami S."/>
            <person name="Terashima Y."/>
            <person name="Suzuki O."/>
            <person name="Nakagawa S."/>
            <person name="Senoh A."/>
            <person name="Mizoguchi H."/>
            <person name="Goto Y."/>
            <person name="Shimizu F."/>
            <person name="Wakebe H."/>
            <person name="Hishigaki H."/>
            <person name="Watanabe T."/>
            <person name="Sugiyama A."/>
            <person name="Takemoto M."/>
            <person name="Kawakami B."/>
            <person name="Yamazaki M."/>
            <person name="Watanabe K."/>
            <person name="Kumagai A."/>
            <person name="Itakura S."/>
            <person name="Fukuzumi Y."/>
            <person name="Fujimori Y."/>
            <person name="Komiyama M."/>
            <person name="Tashiro H."/>
            <person name="Tanigami A."/>
            <person name="Fujiwara T."/>
            <person name="Ono T."/>
            <person name="Yamada K."/>
            <person name="Fujii Y."/>
            <person name="Ozaki K."/>
            <person name="Hirao M."/>
            <person name="Ohmori Y."/>
            <person name="Kawabata A."/>
            <person name="Hikiji T."/>
            <person name="Kobatake N."/>
            <person name="Inagaki H."/>
            <person name="Ikema Y."/>
            <person name="Okamoto S."/>
            <person name="Okitani R."/>
            <person name="Kawakami T."/>
            <person name="Noguchi S."/>
            <person name="Itoh T."/>
            <person name="Shigeta K."/>
            <person name="Senba T."/>
            <person name="Matsumura K."/>
            <person name="Nakajima Y."/>
            <person name="Mizuno T."/>
            <person name="Morinaga M."/>
            <person name="Sasaki M."/>
            <person name="Togashi T."/>
            <person name="Oyama M."/>
            <person name="Hata H."/>
            <person name="Watanabe M."/>
            <person name="Komatsu T."/>
            <person name="Mizushima-Sugano J."/>
            <person name="Satoh T."/>
            <person name="Shirai Y."/>
            <person name="Takahashi Y."/>
            <person name="Nakagawa K."/>
            <person name="Okumura K."/>
            <person name="Nagase T."/>
            <person name="Nomura N."/>
            <person name="Kikuchi H."/>
            <person name="Masuho Y."/>
            <person name="Yamashita R."/>
            <person name="Nakai K."/>
            <person name="Yada T."/>
            <person name="Nakamura Y."/>
            <person name="Ohara O."/>
            <person name="Isogai T."/>
            <person name="Sugano S."/>
        </authorList>
    </citation>
    <scope>NUCLEOTIDE SEQUENCE [LARGE SCALE MRNA] (ISOFORMS 2 AND 3)</scope>
    <scope>VARIANT ARG-339</scope>
    <source>
        <tissue>Hippocampus</tissue>
        <tissue>Synovial cell</tissue>
        <tissue>Thymus</tissue>
    </source>
</reference>
<reference key="5">
    <citation type="journal article" date="2007" name="BMC Genomics">
        <title>The full-ORF clone resource of the German cDNA consortium.</title>
        <authorList>
            <person name="Bechtel S."/>
            <person name="Rosenfelder H."/>
            <person name="Duda A."/>
            <person name="Schmidt C.P."/>
            <person name="Ernst U."/>
            <person name="Wellenreuther R."/>
            <person name="Mehrle A."/>
            <person name="Schuster C."/>
            <person name="Bahr A."/>
            <person name="Bloecker H."/>
            <person name="Heubner D."/>
            <person name="Hoerlein A."/>
            <person name="Michel G."/>
            <person name="Wedler H."/>
            <person name="Koehrer K."/>
            <person name="Ottenwaelder B."/>
            <person name="Poustka A."/>
            <person name="Wiemann S."/>
            <person name="Schupp I."/>
        </authorList>
    </citation>
    <scope>NUCLEOTIDE SEQUENCE [LARGE SCALE MRNA] (ISOFORM 1)</scope>
    <source>
        <tissue>Brain</tissue>
        <tissue>Cervix</tissue>
    </source>
</reference>
<reference key="6">
    <citation type="journal article" date="2003" name="Nature">
        <title>The DNA sequence and analysis of human chromosome 6.</title>
        <authorList>
            <person name="Mungall A.J."/>
            <person name="Palmer S.A."/>
            <person name="Sims S.K."/>
            <person name="Edwards C.A."/>
            <person name="Ashurst J.L."/>
            <person name="Wilming L."/>
            <person name="Jones M.C."/>
            <person name="Horton R."/>
            <person name="Hunt S.E."/>
            <person name="Scott C.E."/>
            <person name="Gilbert J.G.R."/>
            <person name="Clamp M.E."/>
            <person name="Bethel G."/>
            <person name="Milne S."/>
            <person name="Ainscough R."/>
            <person name="Almeida J.P."/>
            <person name="Ambrose K.D."/>
            <person name="Andrews T.D."/>
            <person name="Ashwell R.I.S."/>
            <person name="Babbage A.K."/>
            <person name="Bagguley C.L."/>
            <person name="Bailey J."/>
            <person name="Banerjee R."/>
            <person name="Barker D.J."/>
            <person name="Barlow K.F."/>
            <person name="Bates K."/>
            <person name="Beare D.M."/>
            <person name="Beasley H."/>
            <person name="Beasley O."/>
            <person name="Bird C.P."/>
            <person name="Blakey S.E."/>
            <person name="Bray-Allen S."/>
            <person name="Brook J."/>
            <person name="Brown A.J."/>
            <person name="Brown J.Y."/>
            <person name="Burford D.C."/>
            <person name="Burrill W."/>
            <person name="Burton J."/>
            <person name="Carder C."/>
            <person name="Carter N.P."/>
            <person name="Chapman J.C."/>
            <person name="Clark S.Y."/>
            <person name="Clark G."/>
            <person name="Clee C.M."/>
            <person name="Clegg S."/>
            <person name="Cobley V."/>
            <person name="Collier R.E."/>
            <person name="Collins J.E."/>
            <person name="Colman L.K."/>
            <person name="Corby N.R."/>
            <person name="Coville G.J."/>
            <person name="Culley K.M."/>
            <person name="Dhami P."/>
            <person name="Davies J."/>
            <person name="Dunn M."/>
            <person name="Earthrowl M.E."/>
            <person name="Ellington A.E."/>
            <person name="Evans K.A."/>
            <person name="Faulkner L."/>
            <person name="Francis M.D."/>
            <person name="Frankish A."/>
            <person name="Frankland J."/>
            <person name="French L."/>
            <person name="Garner P."/>
            <person name="Garnett J."/>
            <person name="Ghori M.J."/>
            <person name="Gilby L.M."/>
            <person name="Gillson C.J."/>
            <person name="Glithero R.J."/>
            <person name="Grafham D.V."/>
            <person name="Grant M."/>
            <person name="Gribble S."/>
            <person name="Griffiths C."/>
            <person name="Griffiths M.N.D."/>
            <person name="Hall R."/>
            <person name="Halls K.S."/>
            <person name="Hammond S."/>
            <person name="Harley J.L."/>
            <person name="Hart E.A."/>
            <person name="Heath P.D."/>
            <person name="Heathcott R."/>
            <person name="Holmes S.J."/>
            <person name="Howden P.J."/>
            <person name="Howe K.L."/>
            <person name="Howell G.R."/>
            <person name="Huckle E."/>
            <person name="Humphray S.J."/>
            <person name="Humphries M.D."/>
            <person name="Hunt A.R."/>
            <person name="Johnson C.M."/>
            <person name="Joy A.A."/>
            <person name="Kay M."/>
            <person name="Keenan S.J."/>
            <person name="Kimberley A.M."/>
            <person name="King A."/>
            <person name="Laird G.K."/>
            <person name="Langford C."/>
            <person name="Lawlor S."/>
            <person name="Leongamornlert D.A."/>
            <person name="Leversha M."/>
            <person name="Lloyd C.R."/>
            <person name="Lloyd D.M."/>
            <person name="Loveland J.E."/>
            <person name="Lovell J."/>
            <person name="Martin S."/>
            <person name="Mashreghi-Mohammadi M."/>
            <person name="Maslen G.L."/>
            <person name="Matthews L."/>
            <person name="McCann O.T."/>
            <person name="McLaren S.J."/>
            <person name="McLay K."/>
            <person name="McMurray A."/>
            <person name="Moore M.J.F."/>
            <person name="Mullikin J.C."/>
            <person name="Niblett D."/>
            <person name="Nickerson T."/>
            <person name="Novik K.L."/>
            <person name="Oliver K."/>
            <person name="Overton-Larty E.K."/>
            <person name="Parker A."/>
            <person name="Patel R."/>
            <person name="Pearce A.V."/>
            <person name="Peck A.I."/>
            <person name="Phillimore B.J.C.T."/>
            <person name="Phillips S."/>
            <person name="Plumb R.W."/>
            <person name="Porter K.M."/>
            <person name="Ramsey Y."/>
            <person name="Ranby S.A."/>
            <person name="Rice C.M."/>
            <person name="Ross M.T."/>
            <person name="Searle S.M."/>
            <person name="Sehra H.K."/>
            <person name="Sheridan E."/>
            <person name="Skuce C.D."/>
            <person name="Smith S."/>
            <person name="Smith M."/>
            <person name="Spraggon L."/>
            <person name="Squares S.L."/>
            <person name="Steward C.A."/>
            <person name="Sycamore N."/>
            <person name="Tamlyn-Hall G."/>
            <person name="Tester J."/>
            <person name="Theaker A.J."/>
            <person name="Thomas D.W."/>
            <person name="Thorpe A."/>
            <person name="Tracey A."/>
            <person name="Tromans A."/>
            <person name="Tubby B."/>
            <person name="Wall M."/>
            <person name="Wallis J.M."/>
            <person name="West A.P."/>
            <person name="White S.S."/>
            <person name="Whitehead S.L."/>
            <person name="Whittaker H."/>
            <person name="Wild A."/>
            <person name="Willey D.J."/>
            <person name="Wilmer T.E."/>
            <person name="Wood J.M."/>
            <person name="Wray P.W."/>
            <person name="Wyatt J.C."/>
            <person name="Young L."/>
            <person name="Younger R.M."/>
            <person name="Bentley D.R."/>
            <person name="Coulson A."/>
            <person name="Durbin R.M."/>
            <person name="Hubbard T."/>
            <person name="Sulston J.E."/>
            <person name="Dunham I."/>
            <person name="Rogers J."/>
            <person name="Beck S."/>
        </authorList>
    </citation>
    <scope>NUCLEOTIDE SEQUENCE [LARGE SCALE GENOMIC DNA]</scope>
    <scope>VARIANTS GLY-222 AND ARG-339</scope>
</reference>
<reference key="7">
    <citation type="submission" date="2005-07" db="EMBL/GenBank/DDBJ databases">
        <authorList>
            <person name="Mural R.J."/>
            <person name="Istrail S."/>
            <person name="Sutton G.G."/>
            <person name="Florea L."/>
            <person name="Halpern A.L."/>
            <person name="Mobarry C.M."/>
            <person name="Lippert R."/>
            <person name="Walenz B."/>
            <person name="Shatkay H."/>
            <person name="Dew I."/>
            <person name="Miller J.R."/>
            <person name="Flanigan M.J."/>
            <person name="Edwards N.J."/>
            <person name="Bolanos R."/>
            <person name="Fasulo D."/>
            <person name="Halldorsson B.V."/>
            <person name="Hannenhalli S."/>
            <person name="Turner R."/>
            <person name="Yooseph S."/>
            <person name="Lu F."/>
            <person name="Nusskern D.R."/>
            <person name="Shue B.C."/>
            <person name="Zheng X.H."/>
            <person name="Zhong F."/>
            <person name="Delcher A.L."/>
            <person name="Huson D.H."/>
            <person name="Kravitz S.A."/>
            <person name="Mouchard L."/>
            <person name="Reinert K."/>
            <person name="Remington K.A."/>
            <person name="Clark A.G."/>
            <person name="Waterman M.S."/>
            <person name="Eichler E.E."/>
            <person name="Adams M.D."/>
            <person name="Hunkapiller M.W."/>
            <person name="Myers E.W."/>
            <person name="Venter J.C."/>
        </authorList>
    </citation>
    <scope>NUCLEOTIDE SEQUENCE [LARGE SCALE GENOMIC DNA]</scope>
</reference>
<reference key="8">
    <citation type="journal article" date="2004" name="Genome Res.">
        <title>The status, quality, and expansion of the NIH full-length cDNA project: the Mammalian Gene Collection (MGC).</title>
        <authorList>
            <consortium name="The MGC Project Team"/>
        </authorList>
    </citation>
    <scope>NUCLEOTIDE SEQUENCE [LARGE SCALE MRNA] (ISOFORM 1)</scope>
    <source>
        <tissue>B-cell</tissue>
        <tissue>Testis</tissue>
    </source>
</reference>
<reference key="9">
    <citation type="journal article" date="2006" name="Cell">
        <title>Global, in vivo, and site-specific phosphorylation dynamics in signaling networks.</title>
        <authorList>
            <person name="Olsen J.V."/>
            <person name="Blagoev B."/>
            <person name="Gnad F."/>
            <person name="Macek B."/>
            <person name="Kumar C."/>
            <person name="Mortensen P."/>
            <person name="Mann M."/>
        </authorList>
    </citation>
    <scope>PHOSPHORYLATION [LARGE SCALE ANALYSIS] AT SER-133 AND SER-368</scope>
    <scope>IDENTIFICATION BY MASS SPECTROMETRY [LARGE SCALE ANALYSIS]</scope>
    <source>
        <tissue>Cervix carcinoma</tissue>
    </source>
</reference>
<reference key="10">
    <citation type="journal article" date="2008" name="Mol. Cell">
        <title>Kinase-selective enrichment enables quantitative phosphoproteomics of the kinome across the cell cycle.</title>
        <authorList>
            <person name="Daub H."/>
            <person name="Olsen J.V."/>
            <person name="Bairlein M."/>
            <person name="Gnad F."/>
            <person name="Oppermann F.S."/>
            <person name="Korner R."/>
            <person name="Greff Z."/>
            <person name="Keri G."/>
            <person name="Stemmann O."/>
            <person name="Mann M."/>
        </authorList>
    </citation>
    <scope>PHOSPHORYLATION [LARGE SCALE ANALYSIS] AT SER-368</scope>
    <scope>IDENTIFICATION BY MASS SPECTROMETRY [LARGE SCALE ANALYSIS]</scope>
    <source>
        <tissue>Cervix carcinoma</tissue>
    </source>
</reference>
<reference key="11">
    <citation type="journal article" date="2008" name="Proc. Natl. Acad. Sci. U.S.A.">
        <title>A quantitative atlas of mitotic phosphorylation.</title>
        <authorList>
            <person name="Dephoure N."/>
            <person name="Zhou C."/>
            <person name="Villen J."/>
            <person name="Beausoleil S.A."/>
            <person name="Bakalarski C.E."/>
            <person name="Elledge S.J."/>
            <person name="Gygi S.P."/>
        </authorList>
    </citation>
    <scope>PHOSPHORYLATION [LARGE SCALE ANALYSIS] AT SER-54 AND SER-224</scope>
    <scope>IDENTIFICATION BY MASS SPECTROMETRY [LARGE SCALE ANALYSIS]</scope>
    <source>
        <tissue>Cervix carcinoma</tissue>
    </source>
</reference>
<reference key="12">
    <citation type="journal article" date="2009" name="Anal. Chem.">
        <title>Lys-N and trypsin cover complementary parts of the phosphoproteome in a refined SCX-based approach.</title>
        <authorList>
            <person name="Gauci S."/>
            <person name="Helbig A.O."/>
            <person name="Slijper M."/>
            <person name="Krijgsveld J."/>
            <person name="Heck A.J."/>
            <person name="Mohammed S."/>
        </authorList>
    </citation>
    <scope>IDENTIFICATION BY MASS SPECTROMETRY [LARGE SCALE ANALYSIS]</scope>
</reference>
<reference key="13">
    <citation type="journal article" date="2009" name="Sci. Signal.">
        <title>Quantitative phosphoproteomic analysis of T cell receptor signaling reveals system-wide modulation of protein-protein interactions.</title>
        <authorList>
            <person name="Mayya V."/>
            <person name="Lundgren D.H."/>
            <person name="Hwang S.-I."/>
            <person name="Rezaul K."/>
            <person name="Wu L."/>
            <person name="Eng J.K."/>
            <person name="Rodionov V."/>
            <person name="Han D.K."/>
        </authorList>
    </citation>
    <scope>IDENTIFICATION BY MASS SPECTROMETRY [LARGE SCALE ANALYSIS]</scope>
    <source>
        <tissue>Leukemic T-cell</tissue>
    </source>
</reference>
<reference key="14">
    <citation type="journal article" date="2010" name="Sci. Signal.">
        <title>Quantitative phosphoproteomics reveals widespread full phosphorylation site occupancy during mitosis.</title>
        <authorList>
            <person name="Olsen J.V."/>
            <person name="Vermeulen M."/>
            <person name="Santamaria A."/>
            <person name="Kumar C."/>
            <person name="Miller M.L."/>
            <person name="Jensen L.J."/>
            <person name="Gnad F."/>
            <person name="Cox J."/>
            <person name="Jensen T.S."/>
            <person name="Nigg E.A."/>
            <person name="Brunak S."/>
            <person name="Mann M."/>
        </authorList>
    </citation>
    <scope>PHOSPHORYLATION [LARGE SCALE ANALYSIS] AT SER-54; SER-175; SER-195; THR-199; SER-224 AND SER-368</scope>
    <scope>IDENTIFICATION BY MASS SPECTROMETRY [LARGE SCALE ANALYSIS]</scope>
    <source>
        <tissue>Cervix carcinoma</tissue>
    </source>
</reference>
<reference key="15">
    <citation type="journal article" date="2011" name="Sci. Signal.">
        <title>System-wide temporal characterization of the proteome and phosphoproteome of human embryonic stem cell differentiation.</title>
        <authorList>
            <person name="Rigbolt K.T."/>
            <person name="Prokhorova T.A."/>
            <person name="Akimov V."/>
            <person name="Henningsen J."/>
            <person name="Johansen P.T."/>
            <person name="Kratchmarova I."/>
            <person name="Kassem M."/>
            <person name="Mann M."/>
            <person name="Olsen J.V."/>
            <person name="Blagoev B."/>
        </authorList>
    </citation>
    <scope>PHOSPHORYLATION [LARGE SCALE ANALYSIS] AT SER-368</scope>
    <scope>IDENTIFICATION BY MASS SPECTROMETRY [LARGE SCALE ANALYSIS]</scope>
</reference>
<reference key="16">
    <citation type="journal article" date="2013" name="J. Proteome Res.">
        <title>Toward a comprehensive characterization of a human cancer cell phosphoproteome.</title>
        <authorList>
            <person name="Zhou H."/>
            <person name="Di Palma S."/>
            <person name="Preisinger C."/>
            <person name="Peng M."/>
            <person name="Polat A.N."/>
            <person name="Heck A.J."/>
            <person name="Mohammed S."/>
        </authorList>
    </citation>
    <scope>PHOSPHORYLATION [LARGE SCALE ANALYSIS] AT SER-125; SER-133; SER-175; SER-195; SER-224; SER-368 AND SER-490</scope>
    <scope>IDENTIFICATION BY MASS SPECTROMETRY [LARGE SCALE ANALYSIS]</scope>
    <source>
        <tissue>Cervix carcinoma</tissue>
        <tissue>Erythroleukemia</tissue>
    </source>
</reference>
<reference key="17">
    <citation type="journal article" date="2014" name="Int. J. Mol. Sci.">
        <title>Identification of the high molecular weight isoform of phostensin.</title>
        <authorList>
            <person name="Lin Y.S."/>
            <person name="Huang H.L."/>
            <person name="Liu W.T."/>
            <person name="Lin T.H."/>
            <person name="Huang H.B."/>
        </authorList>
    </citation>
    <scope>FUNCTION (ISOFORM 1)</scope>
    <scope>INTERACTION WITH PROTEIN PHOSPHATASE 1</scope>
    <scope>ALTERNATIVE SPLICING (ISOFORMS 1 AND 4)</scope>
</reference>
<reference key="18">
    <citation type="journal article" date="2014" name="J. Proteomics">
        <title>An enzyme assisted RP-RPLC approach for in-depth analysis of human liver phosphoproteome.</title>
        <authorList>
            <person name="Bian Y."/>
            <person name="Song C."/>
            <person name="Cheng K."/>
            <person name="Dong M."/>
            <person name="Wang F."/>
            <person name="Huang J."/>
            <person name="Sun D."/>
            <person name="Wang L."/>
            <person name="Ye M."/>
            <person name="Zou H."/>
        </authorList>
    </citation>
    <scope>PHOSPHORYLATION [LARGE SCALE ANALYSIS] AT SER-54 AND SER-224</scope>
    <scope>IDENTIFICATION BY MASS SPECTROMETRY [LARGE SCALE ANALYSIS]</scope>
    <source>
        <tissue>Liver</tissue>
    </source>
</reference>
<dbReference type="EMBL" id="DQ988947">
    <property type="protein sequence ID" value="ABL61261.1"/>
    <property type="molecule type" value="mRNA"/>
</dbReference>
<dbReference type="EMBL" id="AB075829">
    <property type="protein sequence ID" value="BAB85535.1"/>
    <property type="status" value="ALT_INIT"/>
    <property type="molecule type" value="mRNA"/>
</dbReference>
<dbReference type="EMBL" id="AB073600">
    <property type="protein sequence ID" value="BAD38640.1"/>
    <property type="molecule type" value="mRNA"/>
</dbReference>
<dbReference type="EMBL" id="AK124880">
    <property type="protein sequence ID" value="BAG54110.1"/>
    <property type="molecule type" value="mRNA"/>
</dbReference>
<dbReference type="EMBL" id="AK125639">
    <property type="protein sequence ID" value="BAC86229.1"/>
    <property type="molecule type" value="mRNA"/>
</dbReference>
<dbReference type="EMBL" id="AK126182">
    <property type="protein sequence ID" value="BAC86478.1"/>
    <property type="molecule type" value="mRNA"/>
</dbReference>
<dbReference type="EMBL" id="AL832318">
    <property type="protein sequence ID" value="CAD38613.1"/>
    <property type="molecule type" value="mRNA"/>
</dbReference>
<dbReference type="EMBL" id="BX647622">
    <property type="protein sequence ID" value="CAI46080.1"/>
    <property type="molecule type" value="mRNA"/>
</dbReference>
<dbReference type="EMBL" id="AL662797">
    <property type="status" value="NOT_ANNOTATED_CDS"/>
    <property type="molecule type" value="Genomic_DNA"/>
</dbReference>
<dbReference type="EMBL" id="AL662798">
    <property type="status" value="NOT_ANNOTATED_CDS"/>
    <property type="molecule type" value="Genomic_DNA"/>
</dbReference>
<dbReference type="EMBL" id="AL732442">
    <property type="status" value="NOT_ANNOTATED_CDS"/>
    <property type="molecule type" value="Genomic_DNA"/>
</dbReference>
<dbReference type="EMBL" id="AL845353">
    <property type="status" value="NOT_ANNOTATED_CDS"/>
    <property type="molecule type" value="Genomic_DNA"/>
</dbReference>
<dbReference type="EMBL" id="BX908728">
    <property type="status" value="NOT_ANNOTATED_CDS"/>
    <property type="molecule type" value="Genomic_DNA"/>
</dbReference>
<dbReference type="EMBL" id="CR753328">
    <property type="status" value="NOT_ANNOTATED_CDS"/>
    <property type="molecule type" value="Genomic_DNA"/>
</dbReference>
<dbReference type="EMBL" id="CR759873">
    <property type="status" value="NOT_ANNOTATED_CDS"/>
    <property type="molecule type" value="Genomic_DNA"/>
</dbReference>
<dbReference type="EMBL" id="CR788240">
    <property type="status" value="NOT_ANNOTATED_CDS"/>
    <property type="molecule type" value="Genomic_DNA"/>
</dbReference>
<dbReference type="EMBL" id="CR936878">
    <property type="status" value="NOT_ANNOTATED_CDS"/>
    <property type="molecule type" value="Genomic_DNA"/>
</dbReference>
<dbReference type="EMBL" id="CH471081">
    <property type="protein sequence ID" value="EAX03318.1"/>
    <property type="molecule type" value="Genomic_DNA"/>
</dbReference>
<dbReference type="EMBL" id="BC006176">
    <property type="protein sequence ID" value="AAH06176.1"/>
    <property type="molecule type" value="mRNA"/>
</dbReference>
<dbReference type="EMBL" id="BC066644">
    <property type="protein sequence ID" value="AAH66644.1"/>
    <property type="molecule type" value="mRNA"/>
</dbReference>
<dbReference type="CCDS" id="CCDS43444.1">
    <molecule id="Q6NYC8-1"/>
</dbReference>
<dbReference type="RefSeq" id="NP_001128342.1">
    <molecule id="Q6NYC8-1"/>
    <property type="nucleotide sequence ID" value="NM_001134870.2"/>
</dbReference>
<dbReference type="RefSeq" id="NP_597728.1">
    <molecule id="Q6NYC8-1"/>
    <property type="nucleotide sequence ID" value="NM_133471.4"/>
</dbReference>
<dbReference type="RefSeq" id="XP_047274214.1">
    <molecule id="Q6NYC8-1"/>
    <property type="nucleotide sequence ID" value="XM_047418258.1"/>
</dbReference>
<dbReference type="SMR" id="Q6NYC8"/>
<dbReference type="BioGRID" id="128092">
    <property type="interactions" value="142"/>
</dbReference>
<dbReference type="FunCoup" id="Q6NYC8">
    <property type="interactions" value="272"/>
</dbReference>
<dbReference type="IntAct" id="Q6NYC8">
    <property type="interactions" value="125"/>
</dbReference>
<dbReference type="MINT" id="Q6NYC8"/>
<dbReference type="STRING" id="9606.ENSP00000480270"/>
<dbReference type="GlyCosmos" id="Q6NYC8">
    <property type="glycosylation" value="3 sites, 1 glycan"/>
</dbReference>
<dbReference type="GlyGen" id="Q6NYC8">
    <property type="glycosylation" value="6 sites, 1 N-linked glycan (1 site), 1 O-linked glycan (3 sites)"/>
</dbReference>
<dbReference type="iPTMnet" id="Q6NYC8"/>
<dbReference type="PhosphoSitePlus" id="Q6NYC8"/>
<dbReference type="BioMuta" id="PPP1R18"/>
<dbReference type="DMDM" id="68052323"/>
<dbReference type="jPOST" id="Q6NYC8"/>
<dbReference type="MassIVE" id="Q6NYC8"/>
<dbReference type="PaxDb" id="9606-ENSP00000274853"/>
<dbReference type="PeptideAtlas" id="Q6NYC8"/>
<dbReference type="ProteomicsDB" id="66784">
    <molecule id="Q6NYC8-1"/>
</dbReference>
<dbReference type="ProteomicsDB" id="66785">
    <molecule id="Q6NYC8-2"/>
</dbReference>
<dbReference type="Pumba" id="Q6NYC8"/>
<dbReference type="Antibodypedia" id="55922">
    <property type="antibodies" value="129 antibodies from 25 providers"/>
</dbReference>
<dbReference type="DNASU" id="170954"/>
<dbReference type="Ensembl" id="ENST00000274853.8">
    <molecule id="Q6NYC8-1"/>
    <property type="protein sequence ID" value="ENSP00000274853.3"/>
    <property type="gene ID" value="ENSG00000146112.12"/>
</dbReference>
<dbReference type="Ensembl" id="ENST00000383573.8">
    <property type="protein sequence ID" value="ENSP00000373067.4"/>
    <property type="gene ID" value="ENSG00000206485.10"/>
</dbReference>
<dbReference type="Ensembl" id="ENST00000399199.7">
    <molecule id="Q6NYC8-1"/>
    <property type="protein sequence ID" value="ENSP00000382150.3"/>
    <property type="gene ID" value="ENSG00000146112.12"/>
</dbReference>
<dbReference type="Ensembl" id="ENST00000400554.3">
    <property type="protein sequence ID" value="ENSP00000383400.3"/>
    <property type="gene ID" value="ENSG00000206485.10"/>
</dbReference>
<dbReference type="Ensembl" id="ENST00000437121.2">
    <molecule id="Q6NYC8-1"/>
    <property type="protein sequence ID" value="ENSP00000405234.2"/>
    <property type="gene ID" value="ENSG00000225060.8"/>
</dbReference>
<dbReference type="Ensembl" id="ENST00000438815.2">
    <molecule id="Q6NYC8-1"/>
    <property type="protein sequence ID" value="ENSP00000413596.2"/>
    <property type="gene ID" value="ENSG00000230341.8"/>
</dbReference>
<dbReference type="Ensembl" id="ENST00000438945.6">
    <molecule id="Q6NYC8-1"/>
    <property type="protein sequence ID" value="ENSP00000400990.2"/>
    <property type="gene ID" value="ENSG00000234000.8"/>
</dbReference>
<dbReference type="Ensembl" id="ENST00000443517.2">
    <molecule id="Q6NYC8-1"/>
    <property type="protein sequence ID" value="ENSP00000404066.2"/>
    <property type="gene ID" value="ENSG00000229998.8"/>
</dbReference>
<dbReference type="Ensembl" id="ENST00000444206.6">
    <molecule id="Q6NYC8-1"/>
    <property type="protein sequence ID" value="ENSP00000416648.2"/>
    <property type="gene ID" value="ENSG00000230341.8"/>
</dbReference>
<dbReference type="Ensembl" id="ENST00000449705.6">
    <molecule id="Q6NYC8-1"/>
    <property type="protein sequence ID" value="ENSP00000388790.2"/>
    <property type="gene ID" value="ENSG00000229998.8"/>
</dbReference>
<dbReference type="Ensembl" id="ENST00000451544.6">
    <molecule id="Q6NYC8-1"/>
    <property type="protein sequence ID" value="ENSP00000400129.2"/>
    <property type="gene ID" value="ENSG00000225060.8"/>
</dbReference>
<dbReference type="Ensembl" id="ENST00000455935.2">
    <molecule id="Q6NYC8-1"/>
    <property type="protein sequence ID" value="ENSP00000412456.2"/>
    <property type="gene ID" value="ENSG00000234000.8"/>
</dbReference>
<dbReference type="Ensembl" id="ENST00000615527.1">
    <molecule id="Q6NYC8-1"/>
    <property type="protein sequence ID" value="ENSP00000480270.1"/>
    <property type="gene ID" value="ENSG00000146112.12"/>
</dbReference>
<dbReference type="Ensembl" id="ENST00000615892.4">
    <molecule id="Q6NYC8-4"/>
    <property type="protein sequence ID" value="ENSP00000482578.1"/>
    <property type="gene ID" value="ENSG00000146112.12"/>
</dbReference>
<dbReference type="GeneID" id="170954"/>
<dbReference type="KEGG" id="hsa:170954"/>
<dbReference type="MANE-Select" id="ENST00000274853.8">
    <property type="protein sequence ID" value="ENSP00000274853.3"/>
    <property type="RefSeq nucleotide sequence ID" value="NM_133471.4"/>
    <property type="RefSeq protein sequence ID" value="NP_597728.1"/>
</dbReference>
<dbReference type="UCSC" id="uc003nra.4">
    <molecule id="Q6NYC8-1"/>
    <property type="organism name" value="human"/>
</dbReference>
<dbReference type="AGR" id="HGNC:29413"/>
<dbReference type="CTD" id="170954"/>
<dbReference type="DisGeNET" id="170954"/>
<dbReference type="GeneCards" id="PPP1R18"/>
<dbReference type="HGNC" id="HGNC:29413">
    <property type="gene designation" value="PPP1R18"/>
</dbReference>
<dbReference type="HPA" id="ENSG00000146112">
    <property type="expression patterns" value="Low tissue specificity"/>
</dbReference>
<dbReference type="MIM" id="610990">
    <property type="type" value="gene"/>
</dbReference>
<dbReference type="neXtProt" id="NX_Q6NYC8"/>
<dbReference type="OpenTargets" id="ENSG00000146112"/>
<dbReference type="PharmGKB" id="PA134918172"/>
<dbReference type="VEuPathDB" id="HostDB:ENSG00000146112"/>
<dbReference type="eggNOG" id="ENOG502RY8Q">
    <property type="taxonomic scope" value="Eukaryota"/>
</dbReference>
<dbReference type="GeneTree" id="ENSGT00530000064035"/>
<dbReference type="HOGENOM" id="CLU_1602160_0_0_1"/>
<dbReference type="InParanoid" id="Q6NYC8"/>
<dbReference type="OMA" id="PGETPEW"/>
<dbReference type="OrthoDB" id="9945184at2759"/>
<dbReference type="PAN-GO" id="Q6NYC8">
    <property type="GO annotations" value="0 GO annotations based on evolutionary models"/>
</dbReference>
<dbReference type="PhylomeDB" id="Q6NYC8"/>
<dbReference type="TreeFam" id="TF337604"/>
<dbReference type="PathwayCommons" id="Q6NYC8"/>
<dbReference type="SignaLink" id="Q6NYC8"/>
<dbReference type="BioGRID-ORCS" id="170954">
    <property type="hits" value="28 hits in 1151 CRISPR screens"/>
</dbReference>
<dbReference type="CD-CODE" id="DEE660B4">
    <property type="entry name" value="Stress granule"/>
</dbReference>
<dbReference type="ChiTaRS" id="PPP1R18">
    <property type="organism name" value="human"/>
</dbReference>
<dbReference type="GeneWiki" id="KIAA1949"/>
<dbReference type="GenomeRNAi" id="170954"/>
<dbReference type="Pharos" id="Q6NYC8">
    <property type="development level" value="Tbio"/>
</dbReference>
<dbReference type="PRO" id="PR:Q6NYC8"/>
<dbReference type="Proteomes" id="UP000005640">
    <property type="component" value="Chromosome 6"/>
</dbReference>
<dbReference type="RNAct" id="Q6NYC8">
    <property type="molecule type" value="protein"/>
</dbReference>
<dbReference type="Bgee" id="ENSG00000146112">
    <property type="expression patterns" value="Expressed in granulocyte and 98 other cell types or tissues"/>
</dbReference>
<dbReference type="ExpressionAtlas" id="Q6NYC8">
    <property type="expression patterns" value="baseline and differential"/>
</dbReference>
<dbReference type="GO" id="GO:0005737">
    <property type="term" value="C:cytoplasm"/>
    <property type="evidence" value="ECO:0007669"/>
    <property type="project" value="UniProtKB-KW"/>
</dbReference>
<dbReference type="GO" id="GO:0005856">
    <property type="term" value="C:cytoskeleton"/>
    <property type="evidence" value="ECO:0007669"/>
    <property type="project" value="UniProtKB-SubCell"/>
</dbReference>
<dbReference type="GO" id="GO:0003779">
    <property type="term" value="F:actin binding"/>
    <property type="evidence" value="ECO:0007669"/>
    <property type="project" value="UniProtKB-KW"/>
</dbReference>
<dbReference type="GO" id="GO:0019902">
    <property type="term" value="F:phosphatase binding"/>
    <property type="evidence" value="ECO:0007669"/>
    <property type="project" value="InterPro"/>
</dbReference>
<dbReference type="InterPro" id="IPR025903">
    <property type="entry name" value="Phostensin/Taperin_N_dom"/>
</dbReference>
<dbReference type="InterPro" id="IPR025907">
    <property type="entry name" value="Phostensin/Taperin_PP1-bd_dom"/>
</dbReference>
<dbReference type="InterPro" id="IPR026671">
    <property type="entry name" value="PPP1R18/Tprn"/>
</dbReference>
<dbReference type="PANTHER" id="PTHR21685:SF0">
    <property type="entry name" value="PHOSTENSIN"/>
    <property type="match status" value="1"/>
</dbReference>
<dbReference type="PANTHER" id="PTHR21685">
    <property type="entry name" value="TON-B BOX DOMAIN"/>
    <property type="match status" value="1"/>
</dbReference>
<dbReference type="Pfam" id="PF13914">
    <property type="entry name" value="Phostensin"/>
    <property type="match status" value="1"/>
</dbReference>
<dbReference type="Pfam" id="PF13916">
    <property type="entry name" value="Phostensin_N"/>
    <property type="match status" value="1"/>
</dbReference>
<gene>
    <name type="primary">PPP1R18</name>
    <name type="synonym">HKMT1098</name>
    <name type="synonym">KIAA1949</name>
</gene>
<evidence type="ECO:0000250" key="1">
    <source>
        <dbReference type="UniProtKB" id="Q8BQ30"/>
    </source>
</evidence>
<evidence type="ECO:0000256" key="2">
    <source>
        <dbReference type="SAM" id="MobiDB-lite"/>
    </source>
</evidence>
<evidence type="ECO:0000269" key="3">
    <source>
    </source>
</evidence>
<evidence type="ECO:0000269" key="4">
    <source>
    </source>
</evidence>
<evidence type="ECO:0000269" key="5">
    <source>
    </source>
</evidence>
<evidence type="ECO:0000269" key="6">
    <source>
    </source>
</evidence>
<evidence type="ECO:0000303" key="7">
    <source>
    </source>
</evidence>
<evidence type="ECO:0000305" key="8"/>
<evidence type="ECO:0007744" key="9">
    <source>
    </source>
</evidence>
<evidence type="ECO:0007744" key="10">
    <source>
    </source>
</evidence>
<evidence type="ECO:0007744" key="11">
    <source>
    </source>
</evidence>
<evidence type="ECO:0007744" key="12">
    <source>
    </source>
</evidence>
<evidence type="ECO:0007744" key="13">
    <source>
    </source>
</evidence>
<evidence type="ECO:0007744" key="14">
    <source>
    </source>
</evidence>
<evidence type="ECO:0007744" key="15">
    <source>
    </source>
</evidence>